<keyword id="KW-1185">Reference proteome</keyword>
<gene>
    <name type="ordered locus">tll1737</name>
</gene>
<protein>
    <recommendedName>
        <fullName evidence="1">UPF0102 protein tll1737</fullName>
    </recommendedName>
</protein>
<accession>Q8DI54</accession>
<organism>
    <name type="scientific">Thermosynechococcus vestitus (strain NIES-2133 / IAM M-273 / BP-1)</name>
    <dbReference type="NCBI Taxonomy" id="197221"/>
    <lineage>
        <taxon>Bacteria</taxon>
        <taxon>Bacillati</taxon>
        <taxon>Cyanobacteriota</taxon>
        <taxon>Cyanophyceae</taxon>
        <taxon>Acaryochloridales</taxon>
        <taxon>Thermosynechococcaceae</taxon>
        <taxon>Thermosynechococcus</taxon>
    </lineage>
</organism>
<evidence type="ECO:0000255" key="1">
    <source>
        <dbReference type="HAMAP-Rule" id="MF_00048"/>
    </source>
</evidence>
<sequence>MRHVGDRGEAVVAAWLQTQQCQILAQNWSCPWGELDIIACDPGGVVLFVEVKTRGSYNWDRDGLDAISPSKQRKLILAAQAFLESQPQWQEHPCRFDVALVRHQRGAYHLHHYLAQAFTLDSIK</sequence>
<name>Y1737_THEVB</name>
<feature type="chain" id="PRO_0000167381" description="UPF0102 protein tll1737">
    <location>
        <begin position="1"/>
        <end position="124"/>
    </location>
</feature>
<reference key="1">
    <citation type="journal article" date="2002" name="DNA Res.">
        <title>Complete genome structure of the thermophilic cyanobacterium Thermosynechococcus elongatus BP-1.</title>
        <authorList>
            <person name="Nakamura Y."/>
            <person name="Kaneko T."/>
            <person name="Sato S."/>
            <person name="Ikeuchi M."/>
            <person name="Katoh H."/>
            <person name="Sasamoto S."/>
            <person name="Watanabe A."/>
            <person name="Iriguchi M."/>
            <person name="Kawashima K."/>
            <person name="Kimura T."/>
            <person name="Kishida Y."/>
            <person name="Kiyokawa C."/>
            <person name="Kohara M."/>
            <person name="Matsumoto M."/>
            <person name="Matsuno A."/>
            <person name="Nakazaki N."/>
            <person name="Shimpo S."/>
            <person name="Sugimoto M."/>
            <person name="Takeuchi C."/>
            <person name="Yamada M."/>
            <person name="Tabata S."/>
        </authorList>
    </citation>
    <scope>NUCLEOTIDE SEQUENCE [LARGE SCALE GENOMIC DNA]</scope>
    <source>
        <strain>NIES-2133 / IAM M-273 / BP-1</strain>
    </source>
</reference>
<proteinExistence type="inferred from homology"/>
<comment type="similarity">
    <text evidence="1">Belongs to the UPF0102 family.</text>
</comment>
<dbReference type="EMBL" id="BA000039">
    <property type="protein sequence ID" value="BAC09289.1"/>
    <property type="molecule type" value="Genomic_DNA"/>
</dbReference>
<dbReference type="RefSeq" id="NP_682527.1">
    <property type="nucleotide sequence ID" value="NC_004113.1"/>
</dbReference>
<dbReference type="RefSeq" id="WP_011057574.1">
    <property type="nucleotide sequence ID" value="NC_004113.1"/>
</dbReference>
<dbReference type="SMR" id="Q8DI54"/>
<dbReference type="STRING" id="197221.gene:10748341"/>
<dbReference type="EnsemblBacteria" id="BAC09289">
    <property type="protein sequence ID" value="BAC09289"/>
    <property type="gene ID" value="BAC09289"/>
</dbReference>
<dbReference type="KEGG" id="tel:tll1737"/>
<dbReference type="eggNOG" id="COG0792">
    <property type="taxonomic scope" value="Bacteria"/>
</dbReference>
<dbReference type="Proteomes" id="UP000000440">
    <property type="component" value="Chromosome"/>
</dbReference>
<dbReference type="GO" id="GO:0003676">
    <property type="term" value="F:nucleic acid binding"/>
    <property type="evidence" value="ECO:0007669"/>
    <property type="project" value="InterPro"/>
</dbReference>
<dbReference type="CDD" id="cd20736">
    <property type="entry name" value="PoNe_Nuclease"/>
    <property type="match status" value="1"/>
</dbReference>
<dbReference type="Gene3D" id="3.40.1350.10">
    <property type="match status" value="1"/>
</dbReference>
<dbReference type="HAMAP" id="MF_00048">
    <property type="entry name" value="UPF0102"/>
    <property type="match status" value="1"/>
</dbReference>
<dbReference type="InterPro" id="IPR011335">
    <property type="entry name" value="Restrct_endonuc-II-like"/>
</dbReference>
<dbReference type="InterPro" id="IPR011856">
    <property type="entry name" value="tRNA_endonuc-like_dom_sf"/>
</dbReference>
<dbReference type="InterPro" id="IPR003509">
    <property type="entry name" value="UPF0102_YraN-like"/>
</dbReference>
<dbReference type="NCBIfam" id="NF009150">
    <property type="entry name" value="PRK12497.1-3"/>
    <property type="match status" value="1"/>
</dbReference>
<dbReference type="NCBIfam" id="TIGR00252">
    <property type="entry name" value="YraN family protein"/>
    <property type="match status" value="1"/>
</dbReference>
<dbReference type="PANTHER" id="PTHR34039">
    <property type="entry name" value="UPF0102 PROTEIN YRAN"/>
    <property type="match status" value="1"/>
</dbReference>
<dbReference type="PANTHER" id="PTHR34039:SF1">
    <property type="entry name" value="UPF0102 PROTEIN YRAN"/>
    <property type="match status" value="1"/>
</dbReference>
<dbReference type="Pfam" id="PF02021">
    <property type="entry name" value="UPF0102"/>
    <property type="match status" value="1"/>
</dbReference>
<dbReference type="SUPFAM" id="SSF52980">
    <property type="entry name" value="Restriction endonuclease-like"/>
    <property type="match status" value="1"/>
</dbReference>